<name>EFP_SHESW</name>
<reference key="1">
    <citation type="submission" date="2006-12" db="EMBL/GenBank/DDBJ databases">
        <title>Complete sequence of Shewanella sp. W3-18-1.</title>
        <authorList>
            <consortium name="US DOE Joint Genome Institute"/>
            <person name="Copeland A."/>
            <person name="Lucas S."/>
            <person name="Lapidus A."/>
            <person name="Barry K."/>
            <person name="Detter J.C."/>
            <person name="Glavina del Rio T."/>
            <person name="Hammon N."/>
            <person name="Israni S."/>
            <person name="Dalin E."/>
            <person name="Tice H."/>
            <person name="Pitluck S."/>
            <person name="Chain P."/>
            <person name="Malfatti S."/>
            <person name="Shin M."/>
            <person name="Vergez L."/>
            <person name="Schmutz J."/>
            <person name="Larimer F."/>
            <person name="Land M."/>
            <person name="Hauser L."/>
            <person name="Kyrpides N."/>
            <person name="Lykidis A."/>
            <person name="Tiedje J."/>
            <person name="Richardson P."/>
        </authorList>
    </citation>
    <scope>NUCLEOTIDE SEQUENCE [LARGE SCALE GENOMIC DNA]</scope>
    <source>
        <strain>W3-18-1</strain>
    </source>
</reference>
<organism>
    <name type="scientific">Shewanella sp. (strain W3-18-1)</name>
    <dbReference type="NCBI Taxonomy" id="351745"/>
    <lineage>
        <taxon>Bacteria</taxon>
        <taxon>Pseudomonadati</taxon>
        <taxon>Pseudomonadota</taxon>
        <taxon>Gammaproteobacteria</taxon>
        <taxon>Alteromonadales</taxon>
        <taxon>Shewanellaceae</taxon>
        <taxon>Shewanella</taxon>
    </lineage>
</organism>
<feature type="chain" id="PRO_1000010854" description="Elongation factor P">
    <location>
        <begin position="1"/>
        <end position="186"/>
    </location>
</feature>
<comment type="function">
    <text evidence="1">Involved in peptide bond synthesis. Stimulates efficient translation and peptide-bond synthesis on native or reconstituted 70S ribosomes in vitro. Probably functions indirectly by altering the affinity of the ribosome for aminoacyl-tRNA, thus increasing their reactivity as acceptors for peptidyl transferase.</text>
</comment>
<comment type="pathway">
    <text evidence="1">Protein biosynthesis; polypeptide chain elongation.</text>
</comment>
<comment type="subcellular location">
    <subcellularLocation>
        <location evidence="1">Cytoplasm</location>
    </subcellularLocation>
</comment>
<comment type="similarity">
    <text evidence="1">Belongs to the elongation factor P family.</text>
</comment>
<dbReference type="EMBL" id="CP000503">
    <property type="protein sequence ID" value="ABM24961.1"/>
    <property type="molecule type" value="Genomic_DNA"/>
</dbReference>
<dbReference type="RefSeq" id="WP_011789431.1">
    <property type="nucleotide sequence ID" value="NC_008750.1"/>
</dbReference>
<dbReference type="SMR" id="A1RJW6"/>
<dbReference type="GeneID" id="67443440"/>
<dbReference type="KEGG" id="shw:Sputw3181_2133"/>
<dbReference type="HOGENOM" id="CLU_074944_2_1_6"/>
<dbReference type="UniPathway" id="UPA00345"/>
<dbReference type="Proteomes" id="UP000002597">
    <property type="component" value="Chromosome"/>
</dbReference>
<dbReference type="GO" id="GO:0005737">
    <property type="term" value="C:cytoplasm"/>
    <property type="evidence" value="ECO:0007669"/>
    <property type="project" value="UniProtKB-SubCell"/>
</dbReference>
<dbReference type="GO" id="GO:0003746">
    <property type="term" value="F:translation elongation factor activity"/>
    <property type="evidence" value="ECO:0007669"/>
    <property type="project" value="UniProtKB-UniRule"/>
</dbReference>
<dbReference type="GO" id="GO:0043043">
    <property type="term" value="P:peptide biosynthetic process"/>
    <property type="evidence" value="ECO:0007669"/>
    <property type="project" value="InterPro"/>
</dbReference>
<dbReference type="CDD" id="cd04470">
    <property type="entry name" value="S1_EF-P_repeat_1"/>
    <property type="match status" value="1"/>
</dbReference>
<dbReference type="CDD" id="cd05794">
    <property type="entry name" value="S1_EF-P_repeat_2"/>
    <property type="match status" value="1"/>
</dbReference>
<dbReference type="FunFam" id="2.30.30.30:FF:000003">
    <property type="entry name" value="Elongation factor P"/>
    <property type="match status" value="1"/>
</dbReference>
<dbReference type="FunFam" id="2.40.50.140:FF:000004">
    <property type="entry name" value="Elongation factor P"/>
    <property type="match status" value="1"/>
</dbReference>
<dbReference type="FunFam" id="2.40.50.140:FF:000009">
    <property type="entry name" value="Elongation factor P"/>
    <property type="match status" value="1"/>
</dbReference>
<dbReference type="Gene3D" id="2.30.30.30">
    <property type="match status" value="1"/>
</dbReference>
<dbReference type="Gene3D" id="2.40.50.140">
    <property type="entry name" value="Nucleic acid-binding proteins"/>
    <property type="match status" value="2"/>
</dbReference>
<dbReference type="HAMAP" id="MF_00141">
    <property type="entry name" value="EF_P"/>
    <property type="match status" value="1"/>
</dbReference>
<dbReference type="InterPro" id="IPR015365">
    <property type="entry name" value="Elong-fact-P_C"/>
</dbReference>
<dbReference type="InterPro" id="IPR012340">
    <property type="entry name" value="NA-bd_OB-fold"/>
</dbReference>
<dbReference type="InterPro" id="IPR014722">
    <property type="entry name" value="Rib_uL2_dom2"/>
</dbReference>
<dbReference type="InterPro" id="IPR020599">
    <property type="entry name" value="Transl_elong_fac_P/YeiP"/>
</dbReference>
<dbReference type="InterPro" id="IPR013185">
    <property type="entry name" value="Transl_elong_KOW-like"/>
</dbReference>
<dbReference type="InterPro" id="IPR001059">
    <property type="entry name" value="Transl_elong_P/YeiP_cen"/>
</dbReference>
<dbReference type="InterPro" id="IPR011768">
    <property type="entry name" value="Transl_elongation_fac_P"/>
</dbReference>
<dbReference type="InterPro" id="IPR008991">
    <property type="entry name" value="Translation_prot_SH3-like_sf"/>
</dbReference>
<dbReference type="NCBIfam" id="TIGR00038">
    <property type="entry name" value="efp"/>
    <property type="match status" value="1"/>
</dbReference>
<dbReference type="NCBIfam" id="NF001810">
    <property type="entry name" value="PRK00529.1"/>
    <property type="match status" value="1"/>
</dbReference>
<dbReference type="PANTHER" id="PTHR30053">
    <property type="entry name" value="ELONGATION FACTOR P"/>
    <property type="match status" value="1"/>
</dbReference>
<dbReference type="PANTHER" id="PTHR30053:SF12">
    <property type="entry name" value="ELONGATION FACTOR P (EF-P) FAMILY PROTEIN"/>
    <property type="match status" value="1"/>
</dbReference>
<dbReference type="Pfam" id="PF01132">
    <property type="entry name" value="EFP"/>
    <property type="match status" value="1"/>
</dbReference>
<dbReference type="Pfam" id="PF08207">
    <property type="entry name" value="EFP_N"/>
    <property type="match status" value="1"/>
</dbReference>
<dbReference type="Pfam" id="PF09285">
    <property type="entry name" value="Elong-fact-P_C"/>
    <property type="match status" value="1"/>
</dbReference>
<dbReference type="PIRSF" id="PIRSF005901">
    <property type="entry name" value="EF-P"/>
    <property type="match status" value="1"/>
</dbReference>
<dbReference type="SMART" id="SM01185">
    <property type="entry name" value="EFP"/>
    <property type="match status" value="1"/>
</dbReference>
<dbReference type="SMART" id="SM00841">
    <property type="entry name" value="Elong-fact-P_C"/>
    <property type="match status" value="1"/>
</dbReference>
<dbReference type="SUPFAM" id="SSF50249">
    <property type="entry name" value="Nucleic acid-binding proteins"/>
    <property type="match status" value="2"/>
</dbReference>
<dbReference type="SUPFAM" id="SSF50104">
    <property type="entry name" value="Translation proteins SH3-like domain"/>
    <property type="match status" value="1"/>
</dbReference>
<accession>A1RJW6</accession>
<protein>
    <recommendedName>
        <fullName evidence="1">Elongation factor P</fullName>
        <shortName evidence="1">EF-P</shortName>
    </recommendedName>
</protein>
<evidence type="ECO:0000255" key="1">
    <source>
        <dbReference type="HAMAP-Rule" id="MF_00141"/>
    </source>
</evidence>
<gene>
    <name evidence="1" type="primary">efp</name>
    <name type="ordered locus">Sputw3181_2133</name>
</gene>
<keyword id="KW-0963">Cytoplasm</keyword>
<keyword id="KW-0251">Elongation factor</keyword>
<keyword id="KW-0648">Protein biosynthesis</keyword>
<proteinExistence type="inferred from homology"/>
<sequence length="186" mass="20571">MKTAHEIRPGNVIMLDGSPWVVQKTETTRSGRNAAIVKLKLKNLLLNSGTETTFKGEDKLEDIVLDRLDCTYSYFADPMYVFMDAEYNQYDVEAENLGDAAAYIVDGMEETCQVTFYDGKAISVEMPTTIVREVIYTEPSARGDTSGKVMKPATITGGGTVSVADFVKVGDKIEIDTRTGEFKKRV</sequence>